<sequence length="301" mass="34157">MNFAQVKDYLVDLQNRIVTGLEQVDGQSFRRDTWDRPEGGGGTSCVIEEGNVLERGGVNFSHVFGKGLPASATAARPELAGRAFEAAGVSLVLHPRNPYAPTVHMNVRFFAATKEGAEPVWWFGGGMDLTPYYGFEEDAVHFHQACKDALQPSGEEYYPRFKKWCDEYFYLKHRKEPRGIGGVFFDDLNQPDFATCFNLTRSVGDHFLAAYVPILQKRRDLPYGERERDFQAYRRGRYVEFNLVWDRGTLFGLQSGGRTESILMSLPPVVKWRYDWSPAAGSPEAKLYTDFLTGRDWLPLG</sequence>
<proteinExistence type="inferred from homology"/>
<comment type="function">
    <text evidence="1">Involved in the heme biosynthesis. Catalyzes the aerobic oxidative decarboxylation of propionate groups of rings A and B of coproporphyrinogen-III to yield the vinyl groups in protoporphyrinogen-IX.</text>
</comment>
<comment type="catalytic activity">
    <reaction evidence="1">
        <text>coproporphyrinogen III + O2 + 2 H(+) = protoporphyrinogen IX + 2 CO2 + 2 H2O</text>
        <dbReference type="Rhea" id="RHEA:18257"/>
        <dbReference type="ChEBI" id="CHEBI:15377"/>
        <dbReference type="ChEBI" id="CHEBI:15378"/>
        <dbReference type="ChEBI" id="CHEBI:15379"/>
        <dbReference type="ChEBI" id="CHEBI:16526"/>
        <dbReference type="ChEBI" id="CHEBI:57307"/>
        <dbReference type="ChEBI" id="CHEBI:57309"/>
        <dbReference type="EC" id="1.3.3.3"/>
    </reaction>
</comment>
<comment type="cofactor">
    <cofactor evidence="1">
        <name>a divalent metal cation</name>
        <dbReference type="ChEBI" id="CHEBI:60240"/>
    </cofactor>
</comment>
<comment type="pathway">
    <text evidence="1">Porphyrin-containing compound metabolism; protoporphyrin-IX biosynthesis; protoporphyrinogen-IX from coproporphyrinogen-III (O2 route): step 1/1.</text>
</comment>
<comment type="subunit">
    <text evidence="1">Homodimer.</text>
</comment>
<comment type="subcellular location">
    <subcellularLocation>
        <location evidence="1">Cytoplasm</location>
    </subcellularLocation>
</comment>
<comment type="similarity">
    <text evidence="1">Belongs to the aerobic coproporphyrinogen-III oxidase family.</text>
</comment>
<gene>
    <name evidence="1" type="primary">hemF</name>
    <name type="ordered locus">NE1876</name>
</gene>
<feature type="chain" id="PRO_0000109904" description="Oxygen-dependent coproporphyrinogen-III oxidase">
    <location>
        <begin position="1"/>
        <end position="301"/>
    </location>
</feature>
<feature type="region of interest" description="Important for dimerization" evidence="1">
    <location>
        <begin position="238"/>
        <end position="273"/>
    </location>
</feature>
<feature type="active site" description="Proton donor" evidence="1">
    <location>
        <position position="104"/>
    </location>
</feature>
<feature type="binding site" evidence="1">
    <location>
        <position position="90"/>
    </location>
    <ligand>
        <name>substrate</name>
    </ligand>
</feature>
<feature type="binding site" evidence="1">
    <location>
        <position position="94"/>
    </location>
    <ligand>
        <name>a divalent metal cation</name>
        <dbReference type="ChEBI" id="CHEBI:60240"/>
    </ligand>
</feature>
<feature type="binding site" evidence="1">
    <location>
        <position position="104"/>
    </location>
    <ligand>
        <name>a divalent metal cation</name>
        <dbReference type="ChEBI" id="CHEBI:60240"/>
    </ligand>
</feature>
<feature type="binding site" evidence="1">
    <location>
        <begin position="106"/>
        <end position="108"/>
    </location>
    <ligand>
        <name>substrate</name>
    </ligand>
</feature>
<feature type="binding site" evidence="1">
    <location>
        <position position="143"/>
    </location>
    <ligand>
        <name>a divalent metal cation</name>
        <dbReference type="ChEBI" id="CHEBI:60240"/>
    </ligand>
</feature>
<feature type="binding site" evidence="1">
    <location>
        <position position="173"/>
    </location>
    <ligand>
        <name>a divalent metal cation</name>
        <dbReference type="ChEBI" id="CHEBI:60240"/>
    </ligand>
</feature>
<feature type="binding site" evidence="1">
    <location>
        <begin position="256"/>
        <end position="258"/>
    </location>
    <ligand>
        <name>substrate</name>
    </ligand>
</feature>
<feature type="site" description="Important for dimerization" evidence="1">
    <location>
        <position position="173"/>
    </location>
</feature>
<keyword id="KW-0963">Cytoplasm</keyword>
<keyword id="KW-0350">Heme biosynthesis</keyword>
<keyword id="KW-0479">Metal-binding</keyword>
<keyword id="KW-0560">Oxidoreductase</keyword>
<keyword id="KW-0627">Porphyrin biosynthesis</keyword>
<keyword id="KW-1185">Reference proteome</keyword>
<evidence type="ECO:0000255" key="1">
    <source>
        <dbReference type="HAMAP-Rule" id="MF_00333"/>
    </source>
</evidence>
<protein>
    <recommendedName>
        <fullName evidence="1">Oxygen-dependent coproporphyrinogen-III oxidase</fullName>
        <shortName evidence="1">CPO</shortName>
        <shortName evidence="1">Coprogen oxidase</shortName>
        <shortName evidence="1">Coproporphyrinogenase</shortName>
        <ecNumber evidence="1">1.3.3.3</ecNumber>
    </recommendedName>
</protein>
<reference key="1">
    <citation type="journal article" date="2003" name="J. Bacteriol.">
        <title>Complete genome sequence of the ammonia-oxidizing bacterium and obligate chemolithoautotroph Nitrosomonas europaea.</title>
        <authorList>
            <person name="Chain P."/>
            <person name="Lamerdin J.E."/>
            <person name="Larimer F.W."/>
            <person name="Regala W."/>
            <person name="Lao V."/>
            <person name="Land M.L."/>
            <person name="Hauser L."/>
            <person name="Hooper A.B."/>
            <person name="Klotz M.G."/>
            <person name="Norton J."/>
            <person name="Sayavedra-Soto L.A."/>
            <person name="Arciero D.M."/>
            <person name="Hommes N.G."/>
            <person name="Whittaker M.M."/>
            <person name="Arp D.J."/>
        </authorList>
    </citation>
    <scope>NUCLEOTIDE SEQUENCE [LARGE SCALE GENOMIC DNA]</scope>
    <source>
        <strain>ATCC 19718 / CIP 103999 / KCTC 2705 / NBRC 14298</strain>
    </source>
</reference>
<dbReference type="EC" id="1.3.3.3" evidence="1"/>
<dbReference type="EMBL" id="AL954747">
    <property type="protein sequence ID" value="CAD85787.1"/>
    <property type="molecule type" value="Genomic_DNA"/>
</dbReference>
<dbReference type="RefSeq" id="WP_011112414.1">
    <property type="nucleotide sequence ID" value="NC_004757.1"/>
</dbReference>
<dbReference type="SMR" id="Q82TL0"/>
<dbReference type="STRING" id="228410.NE1876"/>
<dbReference type="GeneID" id="87105034"/>
<dbReference type="KEGG" id="neu:NE1876"/>
<dbReference type="eggNOG" id="COG0408">
    <property type="taxonomic scope" value="Bacteria"/>
</dbReference>
<dbReference type="HOGENOM" id="CLU_026169_0_1_4"/>
<dbReference type="OrthoDB" id="9777553at2"/>
<dbReference type="PhylomeDB" id="Q82TL0"/>
<dbReference type="UniPathway" id="UPA00251">
    <property type="reaction ID" value="UER00322"/>
</dbReference>
<dbReference type="Proteomes" id="UP000001416">
    <property type="component" value="Chromosome"/>
</dbReference>
<dbReference type="GO" id="GO:0005737">
    <property type="term" value="C:cytoplasm"/>
    <property type="evidence" value="ECO:0007669"/>
    <property type="project" value="UniProtKB-SubCell"/>
</dbReference>
<dbReference type="GO" id="GO:0004109">
    <property type="term" value="F:coproporphyrinogen oxidase activity"/>
    <property type="evidence" value="ECO:0007669"/>
    <property type="project" value="UniProtKB-UniRule"/>
</dbReference>
<dbReference type="GO" id="GO:0046872">
    <property type="term" value="F:metal ion binding"/>
    <property type="evidence" value="ECO:0007669"/>
    <property type="project" value="UniProtKB-KW"/>
</dbReference>
<dbReference type="GO" id="GO:0042803">
    <property type="term" value="F:protein homodimerization activity"/>
    <property type="evidence" value="ECO:0000250"/>
    <property type="project" value="UniProtKB"/>
</dbReference>
<dbReference type="GO" id="GO:0006782">
    <property type="term" value="P:protoporphyrinogen IX biosynthetic process"/>
    <property type="evidence" value="ECO:0007669"/>
    <property type="project" value="UniProtKB-UniRule"/>
</dbReference>
<dbReference type="FunFam" id="3.40.1500.10:FF:000001">
    <property type="entry name" value="Oxygen-dependent coproporphyrinogen-III oxidase"/>
    <property type="match status" value="1"/>
</dbReference>
<dbReference type="Gene3D" id="3.40.1500.10">
    <property type="entry name" value="Coproporphyrinogen III oxidase, aerobic"/>
    <property type="match status" value="1"/>
</dbReference>
<dbReference type="HAMAP" id="MF_00333">
    <property type="entry name" value="Coprogen_oxidas"/>
    <property type="match status" value="1"/>
</dbReference>
<dbReference type="InterPro" id="IPR001260">
    <property type="entry name" value="Coprogen_oxidase_aer"/>
</dbReference>
<dbReference type="InterPro" id="IPR036406">
    <property type="entry name" value="Coprogen_oxidase_aer_sf"/>
</dbReference>
<dbReference type="InterPro" id="IPR018375">
    <property type="entry name" value="Coprogen_oxidase_CS"/>
</dbReference>
<dbReference type="NCBIfam" id="NF003727">
    <property type="entry name" value="PRK05330.1"/>
    <property type="match status" value="1"/>
</dbReference>
<dbReference type="PANTHER" id="PTHR10755">
    <property type="entry name" value="COPROPORPHYRINOGEN III OXIDASE, MITOCHONDRIAL"/>
    <property type="match status" value="1"/>
</dbReference>
<dbReference type="PANTHER" id="PTHR10755:SF0">
    <property type="entry name" value="OXYGEN-DEPENDENT COPROPORPHYRINOGEN-III OXIDASE, MITOCHONDRIAL"/>
    <property type="match status" value="1"/>
</dbReference>
<dbReference type="Pfam" id="PF01218">
    <property type="entry name" value="Coprogen_oxidas"/>
    <property type="match status" value="1"/>
</dbReference>
<dbReference type="PIRSF" id="PIRSF000166">
    <property type="entry name" value="Coproporphyri_ox"/>
    <property type="match status" value="1"/>
</dbReference>
<dbReference type="PRINTS" id="PR00073">
    <property type="entry name" value="COPRGNOXDASE"/>
</dbReference>
<dbReference type="SUPFAM" id="SSF102886">
    <property type="entry name" value="Coproporphyrinogen III oxidase"/>
    <property type="match status" value="1"/>
</dbReference>
<dbReference type="PROSITE" id="PS01021">
    <property type="entry name" value="COPROGEN_OXIDASE"/>
    <property type="match status" value="1"/>
</dbReference>
<accession>Q82TL0</accession>
<name>HEM6_NITEU</name>
<organism>
    <name type="scientific">Nitrosomonas europaea (strain ATCC 19718 / CIP 103999 / KCTC 2705 / NBRC 14298)</name>
    <dbReference type="NCBI Taxonomy" id="228410"/>
    <lineage>
        <taxon>Bacteria</taxon>
        <taxon>Pseudomonadati</taxon>
        <taxon>Pseudomonadota</taxon>
        <taxon>Betaproteobacteria</taxon>
        <taxon>Nitrosomonadales</taxon>
        <taxon>Nitrosomonadaceae</taxon>
        <taxon>Nitrosomonas</taxon>
    </lineage>
</organism>